<keyword id="KW-0028">Amino-acid biosynthesis</keyword>
<keyword id="KW-0055">Arginine biosynthesis</keyword>
<keyword id="KW-0963">Cytoplasm</keyword>
<keyword id="KW-0238">DNA-binding</keyword>
<keyword id="KW-0678">Repressor</keyword>
<keyword id="KW-0804">Transcription</keyword>
<keyword id="KW-0805">Transcription regulation</keyword>
<name>ARGR_YERPG</name>
<comment type="function">
    <text evidence="1">Regulates arginine biosynthesis genes.</text>
</comment>
<comment type="pathway">
    <text>Amino-acid biosynthesis; L-arginine biosynthesis [regulation].</text>
</comment>
<comment type="subcellular location">
    <subcellularLocation>
        <location evidence="1">Cytoplasm</location>
    </subcellularLocation>
</comment>
<comment type="similarity">
    <text evidence="1">Belongs to the ArgR family.</text>
</comment>
<reference key="1">
    <citation type="journal article" date="2010" name="J. Bacteriol.">
        <title>Genome sequence of the deep-rooted Yersinia pestis strain Angola reveals new insights into the evolution and pangenome of the plague bacterium.</title>
        <authorList>
            <person name="Eppinger M."/>
            <person name="Worsham P.L."/>
            <person name="Nikolich M.P."/>
            <person name="Riley D.R."/>
            <person name="Sebastian Y."/>
            <person name="Mou S."/>
            <person name="Achtman M."/>
            <person name="Lindler L.E."/>
            <person name="Ravel J."/>
        </authorList>
    </citation>
    <scope>NUCLEOTIDE SEQUENCE [LARGE SCALE GENOMIC DNA]</scope>
    <source>
        <strain>Angola</strain>
    </source>
</reference>
<sequence>MRNPAKQEDLIKAFKALLKEEKFSSQGEIVLALQEEGFENINQSKVSRMLTKFGAVRTRNAKMEMVYCLPAELGVPTTSSPLKNLVLDVDYNDSVVVINTSPGAAQLIARLLDSLGKAEGILGSIAGDDTIFTTPARGFTVKQLHEAILRLFEQEL</sequence>
<accession>A9R583</accession>
<feature type="chain" id="PRO_1000097896" description="Arginine repressor">
    <location>
        <begin position="1"/>
        <end position="156"/>
    </location>
</feature>
<dbReference type="EMBL" id="CP000901">
    <property type="protein sequence ID" value="ABX85039.1"/>
    <property type="molecule type" value="Genomic_DNA"/>
</dbReference>
<dbReference type="RefSeq" id="WP_002210173.1">
    <property type="nucleotide sequence ID" value="NZ_CP009935.1"/>
</dbReference>
<dbReference type="SMR" id="A9R583"/>
<dbReference type="GeneID" id="57975197"/>
<dbReference type="KEGG" id="ypg:YpAngola_A3970"/>
<dbReference type="PATRIC" id="fig|349746.12.peg.694"/>
<dbReference type="UniPathway" id="UPA00068"/>
<dbReference type="GO" id="GO:0005737">
    <property type="term" value="C:cytoplasm"/>
    <property type="evidence" value="ECO:0007669"/>
    <property type="project" value="UniProtKB-SubCell"/>
</dbReference>
<dbReference type="GO" id="GO:0034618">
    <property type="term" value="F:arginine binding"/>
    <property type="evidence" value="ECO:0007669"/>
    <property type="project" value="InterPro"/>
</dbReference>
<dbReference type="GO" id="GO:0003677">
    <property type="term" value="F:DNA binding"/>
    <property type="evidence" value="ECO:0007669"/>
    <property type="project" value="UniProtKB-KW"/>
</dbReference>
<dbReference type="GO" id="GO:0003700">
    <property type="term" value="F:DNA-binding transcription factor activity"/>
    <property type="evidence" value="ECO:0007669"/>
    <property type="project" value="UniProtKB-UniRule"/>
</dbReference>
<dbReference type="GO" id="GO:0006526">
    <property type="term" value="P:L-arginine biosynthetic process"/>
    <property type="evidence" value="ECO:0007669"/>
    <property type="project" value="UniProtKB-UniPathway"/>
</dbReference>
<dbReference type="GO" id="GO:0051259">
    <property type="term" value="P:protein complex oligomerization"/>
    <property type="evidence" value="ECO:0007669"/>
    <property type="project" value="InterPro"/>
</dbReference>
<dbReference type="GO" id="GO:1900079">
    <property type="term" value="P:regulation of arginine biosynthetic process"/>
    <property type="evidence" value="ECO:0007669"/>
    <property type="project" value="UniProtKB-UniRule"/>
</dbReference>
<dbReference type="FunFam" id="1.10.10.10:FF:000074">
    <property type="entry name" value="Arginine repressor"/>
    <property type="match status" value="1"/>
</dbReference>
<dbReference type="FunFam" id="3.30.1360.40:FF:000004">
    <property type="entry name" value="Arginine repressor"/>
    <property type="match status" value="1"/>
</dbReference>
<dbReference type="Gene3D" id="3.30.1360.40">
    <property type="match status" value="1"/>
</dbReference>
<dbReference type="Gene3D" id="1.10.10.10">
    <property type="entry name" value="Winged helix-like DNA-binding domain superfamily/Winged helix DNA-binding domain"/>
    <property type="match status" value="1"/>
</dbReference>
<dbReference type="HAMAP" id="MF_00173">
    <property type="entry name" value="Arg_repressor"/>
    <property type="match status" value="1"/>
</dbReference>
<dbReference type="InterPro" id="IPR001669">
    <property type="entry name" value="Arg_repress"/>
</dbReference>
<dbReference type="InterPro" id="IPR020899">
    <property type="entry name" value="Arg_repress_C"/>
</dbReference>
<dbReference type="InterPro" id="IPR036251">
    <property type="entry name" value="Arg_repress_C_sf"/>
</dbReference>
<dbReference type="InterPro" id="IPR020900">
    <property type="entry name" value="Arg_repress_DNA-bd"/>
</dbReference>
<dbReference type="InterPro" id="IPR036388">
    <property type="entry name" value="WH-like_DNA-bd_sf"/>
</dbReference>
<dbReference type="InterPro" id="IPR036390">
    <property type="entry name" value="WH_DNA-bd_sf"/>
</dbReference>
<dbReference type="NCBIfam" id="TIGR01529">
    <property type="entry name" value="argR_whole"/>
    <property type="match status" value="1"/>
</dbReference>
<dbReference type="NCBIfam" id="NF003457">
    <property type="entry name" value="PRK05066.1"/>
    <property type="match status" value="1"/>
</dbReference>
<dbReference type="PANTHER" id="PTHR34471">
    <property type="entry name" value="ARGININE REPRESSOR"/>
    <property type="match status" value="1"/>
</dbReference>
<dbReference type="PANTHER" id="PTHR34471:SF1">
    <property type="entry name" value="ARGININE REPRESSOR"/>
    <property type="match status" value="1"/>
</dbReference>
<dbReference type="Pfam" id="PF01316">
    <property type="entry name" value="Arg_repressor"/>
    <property type="match status" value="1"/>
</dbReference>
<dbReference type="Pfam" id="PF02863">
    <property type="entry name" value="Arg_repressor_C"/>
    <property type="match status" value="1"/>
</dbReference>
<dbReference type="PRINTS" id="PR01467">
    <property type="entry name" value="ARGREPRESSOR"/>
</dbReference>
<dbReference type="SUPFAM" id="SSF55252">
    <property type="entry name" value="C-terminal domain of arginine repressor"/>
    <property type="match status" value="1"/>
</dbReference>
<dbReference type="SUPFAM" id="SSF46785">
    <property type="entry name" value="Winged helix' DNA-binding domain"/>
    <property type="match status" value="1"/>
</dbReference>
<protein>
    <recommendedName>
        <fullName evidence="1">Arginine repressor</fullName>
    </recommendedName>
</protein>
<gene>
    <name evidence="1" type="primary">argR</name>
    <name type="ordered locus">YpAngola_A3970</name>
</gene>
<organism>
    <name type="scientific">Yersinia pestis bv. Antiqua (strain Angola)</name>
    <dbReference type="NCBI Taxonomy" id="349746"/>
    <lineage>
        <taxon>Bacteria</taxon>
        <taxon>Pseudomonadati</taxon>
        <taxon>Pseudomonadota</taxon>
        <taxon>Gammaproteobacteria</taxon>
        <taxon>Enterobacterales</taxon>
        <taxon>Yersiniaceae</taxon>
        <taxon>Yersinia</taxon>
    </lineage>
</organism>
<proteinExistence type="inferred from homology"/>
<evidence type="ECO:0000255" key="1">
    <source>
        <dbReference type="HAMAP-Rule" id="MF_00173"/>
    </source>
</evidence>